<feature type="chain" id="PRO_0000210186" description="Syntaxin-1A">
    <location>
        <begin position="1"/>
        <end position="288"/>
    </location>
</feature>
<feature type="topological domain" description="Cytoplasmic" evidence="4">
    <location>
        <begin position="1"/>
        <end position="265"/>
    </location>
</feature>
<feature type="transmembrane region" description="Helical; Anchor for type IV membrane protein" evidence="4">
    <location>
        <begin position="266"/>
        <end position="286"/>
    </location>
</feature>
<feature type="topological domain" description="Extracellular" evidence="4">
    <location>
        <begin position="287"/>
        <end position="288"/>
    </location>
</feature>
<feature type="domain" description="t-SNARE coiled-coil homology" evidence="5">
    <location>
        <begin position="192"/>
        <end position="254"/>
    </location>
</feature>
<feature type="coiled-coil region" evidence="4">
    <location>
        <begin position="68"/>
        <end position="109"/>
    </location>
</feature>
<feature type="modified residue" description="Phosphoserine" evidence="17">
    <location>
        <position position="14"/>
    </location>
</feature>
<feature type="modified residue" description="Phosphoserine" evidence="2">
    <location>
        <position position="64"/>
    </location>
</feature>
<feature type="modified residue" description="Phosphoserine" evidence="3">
    <location>
        <position position="95"/>
    </location>
</feature>
<feature type="modified residue" description="Phosphoserine; by DAPK1" evidence="8">
    <location>
        <position position="188"/>
    </location>
</feature>
<feature type="cross-link" description="Glycyl lysine isopeptide (Lys-Gly) (interchain with G-Cter in SUMO)" evidence="11">
    <location>
        <position position="252"/>
    </location>
</feature>
<feature type="cross-link" description="Glycyl lysine isopeptide (Lys-Gly) (interchain with G-Cter in SUMO)" evidence="11">
    <location>
        <position position="253"/>
    </location>
</feature>
<feature type="cross-link" description="Glycyl lysine isopeptide (Lys-Gly) (interchain with G-Cter in SUMO)" evidence="11">
    <location>
        <position position="256"/>
    </location>
</feature>
<feature type="splice variant" id="VSP_006338" description="In isoform 2." evidence="12 14">
    <original>GEMIDRIEYNVEHAVDYVERAVSDTKKAVKYQSKARRKKIMIIICCVILGIVIASTVGGIFA</original>
    <variation>PQGAFLKSCPEPQPNREEGALWSSGAPGPAGRDD</variation>
    <location>
        <begin position="227"/>
        <end position="288"/>
    </location>
</feature>
<feature type="splice variant" id="VSP_006339" description="In isoform 3." evidence="13">
    <original>GEMIDRIEYNVEHAVDYVERAVSDTKKAVKYQSKARRKKIMIIICCVILGIVIASTVGGIFA</original>
    <variation>TMWRGPCLTPRRPSSTRARRAGRKS</variation>
    <location>
        <begin position="227"/>
        <end position="288"/>
    </location>
</feature>
<feature type="mutagenesis site" description="Complete loss of sumoylation; when associated with R-253 and R-256." evidence="11">
    <original>K</original>
    <variation>R</variation>
    <location>
        <position position="252"/>
    </location>
</feature>
<feature type="mutagenesis site" description="Complete loss of sumoylation; when associated with R-252 and R-256." evidence="11">
    <original>K</original>
    <variation>R</variation>
    <location>
        <position position="253"/>
    </location>
</feature>
<feature type="mutagenesis site" description="Complete loss of sumoylation; when associated with R-252 and R-253." evidence="11">
    <original>K</original>
    <variation>R</variation>
    <location>
        <position position="256"/>
    </location>
</feature>
<feature type="sequence conflict" description="In Ref. 10; AAA20940." evidence="15" ref="10">
    <original>E</original>
    <variation>V</variation>
    <location>
        <position position="73"/>
    </location>
</feature>
<feature type="sequence conflict" description="In Ref. 10; AAA20940." evidence="15" ref="10">
    <original>D</original>
    <variation>V</variation>
    <location>
        <position position="140"/>
    </location>
</feature>
<name>STX1A_HUMAN</name>
<comment type="function">
    <text evidence="2 10 11">Plays an essential role in hormone and neurotransmitter calcium-dependent exocytosis and endocytosis (PubMed:26635000). Part of the SNARE (Soluble NSF Attachment Receptor) complex composed of SNAP25, STX1A and VAMP2 which mediates the fusion of synaptic vesicles with the presynaptic plasma membrane. STX1A and SNAP25 are localized on the plasma membrane while VAMP2 resides in synaptic vesicles. The pairing of the three SNAREs from the N-terminal SNARE motifs to the C-terminal anchors leads to the formation of the SNARE complex, which brings membranes into close proximity and results in final fusion. Participates in the calcium-dependent regulation of acrosomal exocytosis in sperm (PubMed:23091057). Also plays an important role in the exocytosis of hormones such as insulin or glucagon-like peptide 1 (GLP-1) (By similarity).</text>
</comment>
<comment type="subunit">
    <text evidence="2 3 7 8 9 11">Part of the SNARE core complex containing SNAP25, VAMP2 and STX1A; this complex constitutes the basic catalytic machinery of the complex neurotransmitter release apparatus (PubMed:26635000). The SNARE complex interacts with CPLX1 (By similarity). Interacts with STXBP1 (PubMed:12730201, PubMed:26635000). The interaction with STXBP1 promotes assembly of the SNARE complex (By similarity). Interacts (via C-terminus) with KCNB1 (via C-terminus); the interaction increases in a calcium-dependent manner and induces a pore-independent enhancement of exocytosis in neuroendocrine cells, chromaffin cells, pancreatic beta cells and from the soma of dorsal root ganglia (DRG) neurons (By similarity). Interacts with SYTL4 (By similarity). Interacts with STXBP6 (By similarity). Interacts with PLCL1 (via C2 domain) (By similarity). Interacts with OTOF (By similarity). Interacts with LGI3 (By similarity). Interacts (via the H3 domain) with SLC6A4 (via the N-terminus); this interaction regulates SLC4A6 channel conductance in thalamocortical neurons (By similarity). Interacts with SYT6 and SYT8; the interaction is Ca(2+)-dependent (By similarity). Interacts with VAMP8 (PubMed:12130530). Interacts with SNAP23 (PubMed:12130530). Interacts with VAPA and SYBU (PubMed:15459722). Interacts with PRRT2 (By similarity). Interacts with SEPT8 (By similarity). Interacts with STXBP5L (By similarity). Interacts with synaptotagmin-1/SYT1 (By similarity). Interacts with SEPTIN5; in the cerebellar cortex (By similarity). Interacts with SEPTIN4; in the striatum (By similarity).</text>
</comment>
<comment type="interaction">
    <interactant intactId="EBI-712466">
        <id>Q16623</id>
    </interactant>
    <interactant intactId="EBI-5463075">
        <id>Q4LEZ3</id>
        <label>AARD</label>
    </interactant>
    <organismsDiffer>false</organismsDiffer>
    <experiments>3</experiments>
</comment>
<comment type="interaction">
    <interactant intactId="EBI-712466">
        <id>Q16623</id>
    </interactant>
    <interactant intactId="EBI-742038">
        <id>Q9P2A4</id>
        <label>ABI3</label>
    </interactant>
    <organismsDiffer>false</organismsDiffer>
    <experiments>3</experiments>
</comment>
<comment type="interaction">
    <interactant intactId="EBI-712466">
        <id>Q16623</id>
    </interactant>
    <interactant intactId="EBI-11522760">
        <id>Q6RW13-2</id>
        <label>AGTRAP</label>
    </interactant>
    <organismsDiffer>false</organismsDiffer>
    <experiments>3</experiments>
</comment>
<comment type="interaction">
    <interactant intactId="EBI-712466">
        <id>Q16623</id>
    </interactant>
    <interactant intactId="EBI-11957045">
        <id>Q9NVV5-2</id>
        <label>AIG1</label>
    </interactant>
    <organismsDiffer>false</organismsDiffer>
    <experiments>3</experiments>
</comment>
<comment type="interaction">
    <interactant intactId="EBI-712466">
        <id>Q16623</id>
    </interactant>
    <interactant intactId="EBI-12109402">
        <id>Q86W74-2</id>
        <label>ANKRD46</label>
    </interactant>
    <organismsDiffer>false</organismsDiffer>
    <experiments>3</experiments>
</comment>
<comment type="interaction">
    <interactant intactId="EBI-712466">
        <id>Q16623</id>
    </interactant>
    <interactant intactId="EBI-3921628">
        <id>Q16853</id>
        <label>AOC3</label>
    </interactant>
    <organismsDiffer>false</organismsDiffer>
    <experiments>3</experiments>
</comment>
<comment type="interaction">
    <interactant intactId="EBI-712466">
        <id>Q16623</id>
    </interactant>
    <interactant intactId="EBI-4290634">
        <id>Q9BQE5</id>
        <label>APOL2</label>
    </interactant>
    <organismsDiffer>false</organismsDiffer>
    <experiments>3</experiments>
</comment>
<comment type="interaction">
    <interactant intactId="EBI-712466">
        <id>Q16623</id>
    </interactant>
    <interactant intactId="EBI-11976321">
        <id>O95236-2</id>
        <label>APOL3</label>
    </interactant>
    <organismsDiffer>false</organismsDiffer>
    <experiments>3</experiments>
</comment>
<comment type="interaction">
    <interactant intactId="EBI-712466">
        <id>Q16623</id>
    </interactant>
    <interactant intactId="EBI-2808854">
        <id>Q92482</id>
        <label>AQP3</label>
    </interactant>
    <organismsDiffer>false</organismsDiffer>
    <experiments>3</experiments>
</comment>
<comment type="interaction">
    <interactant intactId="EBI-712466">
        <id>Q16623</id>
    </interactant>
    <interactant intactId="EBI-11343438">
        <id>Q3SXY8</id>
        <label>ARL13B</label>
    </interactant>
    <organismsDiffer>false</organismsDiffer>
    <experiments>3</experiments>
</comment>
<comment type="interaction">
    <interactant intactId="EBI-712466">
        <id>Q16623</id>
    </interactant>
    <interactant intactId="EBI-749204">
        <id>O15155</id>
        <label>BET1</label>
    </interactant>
    <organismsDiffer>false</organismsDiffer>
    <experiments>3</experiments>
</comment>
<comment type="interaction">
    <interactant intactId="EBI-712466">
        <id>Q16623</id>
    </interactant>
    <interactant intactId="EBI-465781">
        <id>Q9UL45</id>
        <label>BLOC1S6</label>
    </interactant>
    <organismsDiffer>false</organismsDiffer>
    <experiments>3</experiments>
</comment>
<comment type="interaction">
    <interactant intactId="EBI-712466">
        <id>Q16623</id>
    </interactant>
    <interactant intactId="EBI-4402847">
        <id>Q12981</id>
        <label>BNIP1</label>
    </interactant>
    <organismsDiffer>false</organismsDiffer>
    <experiments>3</experiments>
</comment>
<comment type="interaction">
    <interactant intactId="EBI-712466">
        <id>Q16623</id>
    </interactant>
    <interactant intactId="EBI-8648738">
        <id>Q8WVV5</id>
        <label>BTN2A2</label>
    </interactant>
    <organismsDiffer>false</organismsDiffer>
    <experiments>3</experiments>
</comment>
<comment type="interaction">
    <interactant intactId="EBI-712466">
        <id>Q16623</id>
    </interactant>
    <interactant intactId="EBI-12003442">
        <id>Q8WVX3-2</id>
        <label>C4orf3</label>
    </interactant>
    <organismsDiffer>false</organismsDiffer>
    <experiments>3</experiments>
</comment>
<comment type="interaction">
    <interactant intactId="EBI-712466">
        <id>Q16623</id>
    </interactant>
    <interactant intactId="EBI-712921">
        <id>P60033</id>
        <label>CD81</label>
    </interactant>
    <organismsDiffer>false</organismsDiffer>
    <experiments>3</experiments>
</comment>
<comment type="interaction">
    <interactant intactId="EBI-712466">
        <id>Q16623</id>
    </interactant>
    <interactant intactId="EBI-295634">
        <id>Q16543</id>
        <label>CDC37</label>
    </interactant>
    <organismsDiffer>false</organismsDiffer>
    <experiments>3</experiments>
</comment>
<comment type="interaction">
    <interactant intactId="EBI-712466">
        <id>Q16623</id>
    </interactant>
    <interactant intactId="EBI-11996768">
        <id>Q8NC01</id>
        <label>CLEC1A</label>
    </interactant>
    <organismsDiffer>false</organismsDiffer>
    <experiments>3</experiments>
</comment>
<comment type="interaction">
    <interactant intactId="EBI-712466">
        <id>Q16623</id>
    </interactant>
    <interactant intactId="EBI-6165897">
        <id>Q9NWW5</id>
        <label>CLN6</label>
    </interactant>
    <organismsDiffer>false</organismsDiffer>
    <experiments>3</experiments>
</comment>
<comment type="interaction">
    <interactant intactId="EBI-712466">
        <id>Q16623</id>
    </interactant>
    <interactant intactId="EBI-2807956">
        <id>Q96FZ5</id>
        <label>CMTM7</label>
    </interactant>
    <organismsDiffer>false</organismsDiffer>
    <experiments>3</experiments>
</comment>
<comment type="interaction">
    <interactant intactId="EBI-712466">
        <id>Q16623</id>
    </interactant>
    <interactant intactId="EBI-1058710">
        <id>O43169</id>
        <label>CYB5B</label>
    </interactant>
    <organismsDiffer>false</organismsDiffer>
    <experiments>3</experiments>
</comment>
<comment type="interaction">
    <interactant intactId="EBI-712466">
        <id>Q16623</id>
    </interactant>
    <interactant intactId="EBI-719274">
        <id>Q9Y6V7</id>
        <label>DDX49</label>
    </interactant>
    <organismsDiffer>false</organismsDiffer>
    <experiments>3</experiments>
</comment>
<comment type="interaction">
    <interactant intactId="EBI-712466">
        <id>Q16623</id>
    </interactant>
    <interactant intactId="EBI-8787095">
        <id>O00559</id>
        <label>EBAG9</label>
    </interactant>
    <organismsDiffer>false</organismsDiffer>
    <experiments>3</experiments>
</comment>
<comment type="interaction">
    <interactant intactId="EBI-712466">
        <id>Q16623</id>
    </interactant>
    <interactant intactId="EBI-489887">
        <id>P50402</id>
        <label>EMD</label>
    </interactant>
    <organismsDiffer>false</organismsDiffer>
    <experiments>3</experiments>
</comment>
<comment type="interaction">
    <interactant intactId="EBI-712466">
        <id>Q16623</id>
    </interactant>
    <interactant intactId="EBI-711490">
        <id>Q9UKR5</id>
        <label>ERG28</label>
    </interactant>
    <organismsDiffer>false</organismsDiffer>
    <experiments>3</experiments>
</comment>
<comment type="interaction">
    <interactant intactId="EBI-712466">
        <id>Q16623</id>
    </interactant>
    <interactant intactId="EBI-751864">
        <id>Q9NVF9</id>
        <label>ETNK2</label>
    </interactant>
    <organismsDiffer>false</organismsDiffer>
    <experiments>3</experiments>
</comment>
<comment type="interaction">
    <interactant intactId="EBI-712466">
        <id>Q16623</id>
    </interactant>
    <interactant intactId="EBI-2876774">
        <id>Q92520</id>
        <label>FAM3C</label>
    </interactant>
    <organismsDiffer>false</organismsDiffer>
    <experiments>3</experiments>
</comment>
<comment type="interaction">
    <interactant intactId="EBI-712466">
        <id>Q16623</id>
    </interactant>
    <interactant intactId="EBI-11991950">
        <id>Q8WWP7</id>
        <label>GIMAP1</label>
    </interactant>
    <organismsDiffer>false</organismsDiffer>
    <experiments>3</experiments>
</comment>
<comment type="interaction">
    <interactant intactId="EBI-712466">
        <id>Q16623</id>
    </interactant>
    <interactant intactId="EBI-6166686">
        <id>Q96F15</id>
        <label>GIMAP5</label>
    </interactant>
    <organismsDiffer>false</organismsDiffer>
    <experiments>3</experiments>
</comment>
<comment type="interaction">
    <interactant intactId="EBI-712466">
        <id>Q16623</id>
    </interactant>
    <interactant intactId="EBI-4401517">
        <id>O14653</id>
        <label>GOSR2</label>
    </interactant>
    <organismsDiffer>false</organismsDiffer>
    <experiments>6</experiments>
</comment>
<comment type="interaction">
    <interactant intactId="EBI-712466">
        <id>Q16623</id>
    </interactant>
    <interactant intactId="EBI-11992640">
        <id>Q13491-3</id>
        <label>GPM6B</label>
    </interactant>
    <organismsDiffer>false</organismsDiffer>
    <experiments>3</experiments>
</comment>
<comment type="interaction">
    <interactant intactId="EBI-712466">
        <id>Q16623</id>
    </interactant>
    <interactant intactId="EBI-2806151">
        <id>P09601</id>
        <label>HMOX1</label>
    </interactant>
    <organismsDiffer>false</organismsDiffer>
    <experiments>4</experiments>
</comment>
<comment type="interaction">
    <interactant intactId="EBI-712466">
        <id>Q16623</id>
    </interactant>
    <interactant intactId="EBI-10266796">
        <id>Q8N5M9</id>
        <label>JAGN1</label>
    </interactant>
    <organismsDiffer>false</organismsDiffer>
    <experiments>3</experiments>
</comment>
<comment type="interaction">
    <interactant intactId="EBI-712466">
        <id>Q16623</id>
    </interactant>
    <interactant intactId="EBI-14069005">
        <id>Q9BVG8-5</id>
        <label>KIFC3</label>
    </interactant>
    <organismsDiffer>false</organismsDiffer>
    <experiments>3</experiments>
</comment>
<comment type="interaction">
    <interactant intactId="EBI-712466">
        <id>Q16623</id>
    </interactant>
    <interactant intactId="EBI-3932027">
        <id>P21145</id>
        <label>MAL</label>
    </interactant>
    <organismsDiffer>false</organismsDiffer>
    <experiments>4</experiments>
</comment>
<comment type="interaction">
    <interactant intactId="EBI-712466">
        <id>Q16623</id>
    </interactant>
    <interactant intactId="EBI-750078">
        <id>Q13021</id>
        <label>MALL</label>
    </interactant>
    <organismsDiffer>false</organismsDiffer>
    <experiments>3</experiments>
</comment>
<comment type="interaction">
    <interactant intactId="EBI-712466">
        <id>Q16623</id>
    </interactant>
    <interactant intactId="EBI-8449636">
        <id>P30301</id>
        <label>MIP</label>
    </interactant>
    <organismsDiffer>false</organismsDiffer>
    <experiments>3</experiments>
</comment>
<comment type="interaction">
    <interactant intactId="EBI-712466">
        <id>Q16623</id>
    </interactant>
    <interactant intactId="EBI-6163737">
        <id>Q8N4V1</id>
        <label>MMGT1</label>
    </interactant>
    <organismsDiffer>false</organismsDiffer>
    <experiments>3</experiments>
</comment>
<comment type="interaction">
    <interactant intactId="EBI-712466">
        <id>Q16623</id>
    </interactant>
    <interactant intactId="EBI-3921185">
        <id>Q9H115</id>
        <label>NAPB</label>
    </interactant>
    <organismsDiffer>false</organismsDiffer>
    <experiments>4</experiments>
</comment>
<comment type="interaction">
    <interactant intactId="EBI-712466">
        <id>Q16623</id>
    </interactant>
    <interactant intactId="EBI-10317425">
        <id>Q9NZG7</id>
        <label>NINJ2</label>
    </interactant>
    <organismsDiffer>false</organismsDiffer>
    <experiments>3</experiments>
</comment>
<comment type="interaction">
    <interactant intactId="EBI-712466">
        <id>Q16623</id>
    </interactant>
    <interactant intactId="EBI-3919611">
        <id>Q16617</id>
        <label>NKG7</label>
    </interactant>
    <organismsDiffer>false</organismsDiffer>
    <experiments>4</experiments>
</comment>
<comment type="interaction">
    <interactant intactId="EBI-712466">
        <id>Q16623</id>
    </interactant>
    <interactant intactId="EBI-10262547">
        <id>Q8IXM6</id>
        <label>NRM</label>
    </interactant>
    <organismsDiffer>false</organismsDiffer>
    <experiments>3</experiments>
</comment>
<comment type="interaction">
    <interactant intactId="EBI-712466">
        <id>Q16623</id>
    </interactant>
    <interactant intactId="EBI-12092917">
        <id>Q9UHJ9-5</id>
        <label>PGAP2</label>
    </interactant>
    <organismsDiffer>false</organismsDiffer>
    <experiments>3</experiments>
</comment>
<comment type="interaction">
    <interactant intactId="EBI-712466">
        <id>Q16623</id>
    </interactant>
    <interactant intactId="EBI-692836">
        <id>P26678</id>
        <label>PLN</label>
    </interactant>
    <organismsDiffer>false</organismsDiffer>
    <experiments>3</experiments>
</comment>
<comment type="interaction">
    <interactant intactId="EBI-712466">
        <id>Q16623</id>
    </interactant>
    <interactant intactId="EBI-12188331">
        <id>P60201-2</id>
        <label>PLP1</label>
    </interactant>
    <organismsDiffer>false</organismsDiffer>
    <experiments>3</experiments>
</comment>
<comment type="interaction">
    <interactant intactId="EBI-712466">
        <id>Q16623</id>
    </interactant>
    <interactant intactId="EBI-10485931">
        <id>Q5VZY2</id>
        <label>PLPP4</label>
    </interactant>
    <organismsDiffer>false</organismsDiffer>
    <experiments>3</experiments>
</comment>
<comment type="interaction">
    <interactant intactId="EBI-712466">
        <id>Q16623</id>
    </interactant>
    <interactant intactId="EBI-11721828">
        <id>Q8IY26</id>
        <label>PLPP6</label>
    </interactant>
    <organismsDiffer>false</organismsDiffer>
    <experiments>3</experiments>
</comment>
<comment type="interaction">
    <interactant intactId="EBI-712466">
        <id>Q16623</id>
    </interactant>
    <interactant intactId="EBI-8652812">
        <id>P54315</id>
        <label>PNLIPRP1</label>
    </interactant>
    <organismsDiffer>false</organismsDiffer>
    <experiments>3</experiments>
</comment>
<comment type="interaction">
    <interactant intactId="EBI-712466">
        <id>Q16623</id>
    </interactant>
    <interactant intactId="EBI-743796">
        <id>Q8TBN0</id>
        <label>RAB3IL1</label>
    </interactant>
    <organismsDiffer>false</organismsDiffer>
    <experiments>3</experiments>
</comment>
<comment type="interaction">
    <interactant intactId="EBI-712466">
        <id>Q16623</id>
    </interactant>
    <interactant intactId="EBI-2806908">
        <id>Q96LZ7</id>
        <label>RMDN2</label>
    </interactant>
    <organismsDiffer>false</organismsDiffer>
    <experiments>3</experiments>
</comment>
<comment type="interaction">
    <interactant intactId="EBI-712466">
        <id>Q16623</id>
    </interactant>
    <interactant intactId="EBI-2340927">
        <id>P78317</id>
        <label>RNF4</label>
    </interactant>
    <organismsDiffer>false</organismsDiffer>
    <experiments>3</experiments>
</comment>
<comment type="interaction">
    <interactant intactId="EBI-712466">
        <id>Q16623</id>
    </interactant>
    <interactant intactId="EBI-10244780">
        <id>Q5QGT7</id>
        <label>RTP2</label>
    </interactant>
    <organismsDiffer>false</organismsDiffer>
    <experiments>3</experiments>
</comment>
<comment type="interaction">
    <interactant intactId="EBI-712466">
        <id>Q16623</id>
    </interactant>
    <interactant intactId="EBI-8652744">
        <id>Q96IW7</id>
        <label>SEC22A</label>
    </interactant>
    <organismsDiffer>false</organismsDiffer>
    <experiments>3</experiments>
</comment>
<comment type="interaction">
    <interactant intactId="EBI-712466">
        <id>Q16623</id>
    </interactant>
    <interactant intactId="EBI-1058865">
        <id>O75396</id>
        <label>SEC22B</label>
    </interactant>
    <organismsDiffer>false</organismsDiffer>
    <experiments>3</experiments>
</comment>
<comment type="interaction">
    <interactant intactId="EBI-712466">
        <id>Q16623</id>
    </interactant>
    <interactant intactId="EBI-10329948">
        <id>Q9Y6X1</id>
        <label>SERP1</label>
    </interactant>
    <organismsDiffer>false</organismsDiffer>
    <experiments>3</experiments>
</comment>
<comment type="interaction">
    <interactant intactId="EBI-712466">
        <id>Q16623</id>
    </interactant>
    <interactant intactId="EBI-749270">
        <id>Q8N6R1</id>
        <label>SERP2</label>
    </interactant>
    <organismsDiffer>false</organismsDiffer>
    <experiments>3</experiments>
</comment>
<comment type="interaction">
    <interactant intactId="EBI-712466">
        <id>Q16623</id>
    </interactant>
    <interactant intactId="EBI-12188413">
        <id>B2RUZ4</id>
        <label>SMIM1</label>
    </interactant>
    <organismsDiffer>false</organismsDiffer>
    <experiments>3</experiments>
</comment>
<comment type="interaction">
    <interactant intactId="EBI-712466">
        <id>Q16623</id>
    </interactant>
    <interactant intactId="EBI-741850">
        <id>Q9BZL3</id>
        <label>SMIM3</label>
    </interactant>
    <organismsDiffer>false</organismsDiffer>
    <experiments>3</experiments>
</comment>
<comment type="interaction">
    <interactant intactId="EBI-712466">
        <id>Q16623</id>
    </interactant>
    <interactant intactId="EBI-524785">
        <id>P60880</id>
        <label>SNAP25</label>
    </interactant>
    <organismsDiffer>false</organismsDiffer>
    <experiments>3</experiments>
</comment>
<comment type="interaction">
    <interactant intactId="EBI-712466">
        <id>Q16623</id>
    </interactant>
    <interactant intactId="EBI-12177361">
        <id>P60880-2</id>
        <label>SNAP25</label>
    </interactant>
    <organismsDiffer>false</organismsDiffer>
    <experiments>5</experiments>
</comment>
<comment type="interaction">
    <interactant intactId="EBI-712466">
        <id>Q16623</id>
    </interactant>
    <interactant intactId="EBI-10244848">
        <id>Q5SQN1</id>
        <label>SNAP47</label>
    </interactant>
    <organismsDiffer>false</organismsDiffer>
    <experiments>3</experiments>
</comment>
<comment type="interaction">
    <interactant intactId="EBI-712466">
        <id>Q16623</id>
    </interactant>
    <interactant intactId="EBI-985879">
        <id>P37840</id>
        <label>SNCA</label>
    </interactant>
    <organismsDiffer>false</organismsDiffer>
    <experiments>2</experiments>
</comment>
<comment type="interaction">
    <interactant intactId="EBI-712466">
        <id>Q16623</id>
    </interactant>
    <interactant intactId="EBI-11957067">
        <id>Q6UX34</id>
        <label>SNORC</label>
    </interactant>
    <organismsDiffer>false</organismsDiffer>
    <experiments>3</experiments>
</comment>
<comment type="interaction">
    <interactant intactId="EBI-712466">
        <id>Q16623</id>
    </interactant>
    <interactant intactId="EBI-12200293">
        <id>P0DN84</id>
        <label>STRIT1</label>
    </interactant>
    <organismsDiffer>false</organismsDiffer>
    <experiments>3</experiments>
</comment>
<comment type="interaction">
    <interactant intactId="EBI-712466">
        <id>Q16623</id>
    </interactant>
    <interactant intactId="EBI-12094584">
        <id>O60499-2</id>
        <label>STX10</label>
    </interactant>
    <organismsDiffer>false</organismsDiffer>
    <experiments>3</experiments>
</comment>
<comment type="interaction">
    <interactant intactId="EBI-712466">
        <id>Q16623</id>
    </interactant>
    <interactant intactId="EBI-714135">
        <id>O75558</id>
        <label>STX11</label>
    </interactant>
    <organismsDiffer>false</organismsDiffer>
    <experiments>3</experiments>
</comment>
<comment type="interaction">
    <interactant intactId="EBI-712466">
        <id>Q16623</id>
    </interactant>
    <interactant intactId="EBI-2691717">
        <id>Q86Y82</id>
        <label>STX12</label>
    </interactant>
    <organismsDiffer>false</organismsDiffer>
    <experiments>3</experiments>
</comment>
<comment type="interaction">
    <interactant intactId="EBI-712466">
        <id>Q16623</id>
    </interactant>
    <interactant intactId="EBI-9089968">
        <id>O14662-5</id>
        <label>STX16</label>
    </interactant>
    <organismsDiffer>false</organismsDiffer>
    <experiments>3</experiments>
</comment>
<comment type="interaction">
    <interactant intactId="EBI-712466">
        <id>Q16623</id>
    </interactant>
    <interactant intactId="EBI-712466">
        <id>Q16623</id>
        <label>STX1A</label>
    </interactant>
    <organismsDiffer>false</organismsDiffer>
    <experiments>5</experiments>
</comment>
<comment type="interaction">
    <interactant intactId="EBI-712466">
        <id>Q16623</id>
    </interactant>
    <interactant intactId="EBI-11956649">
        <id>P32856-2</id>
        <label>STX2</label>
    </interactant>
    <organismsDiffer>false</organismsDiffer>
    <experiments>3</experiments>
</comment>
<comment type="interaction">
    <interactant intactId="EBI-712466">
        <id>Q16623</id>
    </interactant>
    <interactant intactId="EBI-1394295">
        <id>Q13277</id>
        <label>STX3</label>
    </interactant>
    <organismsDiffer>false</organismsDiffer>
    <experiments>3</experiments>
</comment>
<comment type="interaction">
    <interactant intactId="EBI-712466">
        <id>Q16623</id>
    </interactant>
    <interactant intactId="EBI-744942">
        <id>Q12846</id>
        <label>STX4</label>
    </interactant>
    <organismsDiffer>false</organismsDiffer>
    <experiments>3</experiments>
</comment>
<comment type="interaction">
    <interactant intactId="EBI-712466">
        <id>Q16623</id>
    </interactant>
    <interactant intactId="EBI-714206">
        <id>Q13190</id>
        <label>STX5</label>
    </interactant>
    <organismsDiffer>false</organismsDiffer>
    <experiments>3</experiments>
</comment>
<comment type="interaction">
    <interactant intactId="EBI-712466">
        <id>Q16623</id>
    </interactant>
    <interactant intactId="EBI-2695795">
        <id>O43752</id>
        <label>STX6</label>
    </interactant>
    <organismsDiffer>false</organismsDiffer>
    <experiments>3</experiments>
</comment>
<comment type="interaction">
    <interactant intactId="EBI-712466">
        <id>Q16623</id>
    </interactant>
    <interactant intactId="EBI-3221827">
        <id>O15400</id>
        <label>STX7</label>
    </interactant>
    <organismsDiffer>false</organismsDiffer>
    <experiments>3</experiments>
</comment>
<comment type="interaction">
    <interactant intactId="EBI-712466">
        <id>Q16623</id>
    </interactant>
    <interactant intactId="EBI-727240">
        <id>Q9UNK0</id>
        <label>STX8</label>
    </interactant>
    <organismsDiffer>false</organismsDiffer>
    <experiments>3</experiments>
</comment>
<comment type="interaction">
    <interactant intactId="EBI-712466">
        <id>Q16623</id>
    </interactant>
    <interactant intactId="EBI-11955057">
        <id>Q8N8B7-2</id>
        <label>TCEANC</label>
    </interactant>
    <organismsDiffer>false</organismsDiffer>
    <experiments>3</experiments>
</comment>
<comment type="interaction">
    <interactant intactId="EBI-712466">
        <id>Q16623</id>
    </interactant>
    <interactant intactId="EBI-8644968">
        <id>Q9NV29</id>
        <label>TMEM100</label>
    </interactant>
    <organismsDiffer>false</organismsDiffer>
    <experiments>3</experiments>
</comment>
<comment type="interaction">
    <interactant intactId="EBI-712466">
        <id>Q16623</id>
    </interactant>
    <interactant intactId="EBI-727322">
        <id>Q9BXJ8</id>
        <label>TMEM120A</label>
    </interactant>
    <organismsDiffer>false</organismsDiffer>
    <experiments>3</experiments>
</comment>
<comment type="interaction">
    <interactant intactId="EBI-712466">
        <id>Q16623</id>
    </interactant>
    <interactant intactId="EBI-10694905">
        <id>Q5BJH2-2</id>
        <label>TMEM128</label>
    </interactant>
    <organismsDiffer>false</organismsDiffer>
    <experiments>3</experiments>
</comment>
<comment type="interaction">
    <interactant intactId="EBI-712466">
        <id>Q16623</id>
    </interactant>
    <interactant intactId="EBI-2339195">
        <id>Q9P0S9</id>
        <label>TMEM14C</label>
    </interactant>
    <organismsDiffer>false</organismsDiffer>
    <experiments>3</experiments>
</comment>
<comment type="interaction">
    <interactant intactId="EBI-712466">
        <id>Q16623</id>
    </interactant>
    <interactant intactId="EBI-10265825">
        <id>Q8N511</id>
        <label>TMEM199</label>
    </interactant>
    <organismsDiffer>false</organismsDiffer>
    <experiments>3</experiments>
</comment>
<comment type="interaction">
    <interactant intactId="EBI-712466">
        <id>Q16623</id>
    </interactant>
    <interactant intactId="EBI-347385">
        <id>Q9H0R3</id>
        <label>TMEM222</label>
    </interactant>
    <organismsDiffer>false</organismsDiffer>
    <experiments>3</experiments>
</comment>
<comment type="interaction">
    <interactant intactId="EBI-712466">
        <id>Q16623</id>
    </interactant>
    <interactant intactId="EBI-11956809">
        <id>Q8TBM7</id>
        <label>TMEM254</label>
    </interactant>
    <organismsDiffer>false</organismsDiffer>
    <experiments>3</experiments>
</comment>
<comment type="interaction">
    <interactant intactId="EBI-712466">
        <id>Q16623</id>
    </interactant>
    <interactant intactId="EBI-10288884">
        <id>Q96HV5</id>
        <label>TMEM41A</label>
    </interactant>
    <organismsDiffer>false</organismsDiffer>
    <experiments>3</experiments>
</comment>
<comment type="interaction">
    <interactant intactId="EBI-712466">
        <id>Q16623</id>
    </interactant>
    <interactant intactId="EBI-2852148">
        <id>Q9H2L4</id>
        <label>TMEM60</label>
    </interactant>
    <organismsDiffer>false</organismsDiffer>
    <experiments>3</experiments>
</comment>
<comment type="interaction">
    <interactant intactId="EBI-712466">
        <id>Q16623</id>
    </interactant>
    <interactant intactId="EBI-359977">
        <id>P01375</id>
        <label>TNF</label>
    </interactant>
    <organismsDiffer>false</organismsDiffer>
    <experiments>4</experiments>
</comment>
<comment type="interaction">
    <interactant intactId="EBI-712466">
        <id>Q16623</id>
    </interactant>
    <interactant intactId="EBI-765817">
        <id>Q9Y228</id>
        <label>TRAF3IP3</label>
    </interactant>
    <organismsDiffer>false</organismsDiffer>
    <experiments>3</experiments>
</comment>
<comment type="interaction">
    <interactant intactId="EBI-712466">
        <id>Q16623</id>
    </interactant>
    <interactant intactId="EBI-10241197">
        <id>Q3SY00</id>
        <label>TSGA10IP</label>
    </interactant>
    <organismsDiffer>false</organismsDiffer>
    <experiments>3</experiments>
</comment>
<comment type="interaction">
    <interactant intactId="EBI-712466">
        <id>Q16623</id>
    </interactant>
    <interactant intactId="EBI-12003468">
        <id>A0AVG3</id>
        <label>TSNARE1</label>
    </interactant>
    <organismsDiffer>false</organismsDiffer>
    <experiments>3</experiments>
</comment>
<comment type="interaction">
    <interactant intactId="EBI-712466">
        <id>Q16623</id>
    </interactant>
    <interactant intactId="EBI-359793">
        <id>P40222</id>
        <label>TXLNA</label>
    </interactant>
    <organismsDiffer>false</organismsDiffer>
    <experiments>4</experiments>
</comment>
<comment type="interaction">
    <interactant intactId="EBI-712466">
        <id>Q16623</id>
    </interactant>
    <interactant intactId="EBI-10180829">
        <id>Q7KZS0</id>
        <label>UBE2I</label>
    </interactant>
    <organismsDiffer>false</organismsDiffer>
    <experiments>3</experiments>
</comment>
<comment type="interaction">
    <interactant intactId="EBI-712466">
        <id>Q16623</id>
    </interactant>
    <interactant intactId="EBI-17208936">
        <id>P0CB47</id>
        <label>UBTFL1</label>
    </interactant>
    <organismsDiffer>false</organismsDiffer>
    <experiments>3</experiments>
</comment>
<comment type="interaction">
    <interactant intactId="EBI-712466">
        <id>Q16623</id>
    </interactant>
    <interactant intactId="EBI-12237619">
        <id>O75841</id>
        <label>UPK1B</label>
    </interactant>
    <organismsDiffer>false</organismsDiffer>
    <experiments>3</experiments>
</comment>
<comment type="interaction">
    <interactant intactId="EBI-712466">
        <id>Q16623</id>
    </interactant>
    <interactant intactId="EBI-742842">
        <id>Q9NZ43</id>
        <label>USE1</label>
    </interactant>
    <organismsDiffer>false</organismsDiffer>
    <experiments>3</experiments>
</comment>
<comment type="interaction">
    <interactant intactId="EBI-712466">
        <id>Q16623</id>
    </interactant>
    <interactant intactId="EBI-12097582">
        <id>P23763-3</id>
        <label>VAMP1</label>
    </interactant>
    <organismsDiffer>false</organismsDiffer>
    <experiments>3</experiments>
</comment>
<comment type="interaction">
    <interactant intactId="EBI-712466">
        <id>Q16623</id>
    </interactant>
    <interactant intactId="EBI-520113">
        <id>P63027</id>
        <label>VAMP2</label>
    </interactant>
    <organismsDiffer>false</organismsDiffer>
    <experiments>5</experiments>
</comment>
<comment type="interaction">
    <interactant intactId="EBI-712466">
        <id>Q16623</id>
    </interactant>
    <interactant intactId="EBI-722343">
        <id>Q15836</id>
        <label>VAMP3</label>
    </interactant>
    <organismsDiffer>false</organismsDiffer>
    <experiments>3</experiments>
</comment>
<comment type="interaction">
    <interactant intactId="EBI-712466">
        <id>Q16623</id>
    </interactant>
    <interactant intactId="EBI-744953">
        <id>O75379</id>
        <label>VAMP4</label>
    </interactant>
    <organismsDiffer>false</organismsDiffer>
    <experiments>3</experiments>
</comment>
<comment type="interaction">
    <interactant intactId="EBI-712466">
        <id>Q16623</id>
    </interactant>
    <interactant intactId="EBI-10191195">
        <id>O95183</id>
        <label>VAMP5</label>
    </interactant>
    <organismsDiffer>false</organismsDiffer>
    <experiments>3</experiments>
</comment>
<comment type="interaction">
    <interactant intactId="EBI-712466">
        <id>Q16623</id>
    </interactant>
    <interactant intactId="EBI-4311759">
        <id>Q8IW00</id>
        <label>VSTM4</label>
    </interactant>
    <organismsDiffer>false</organismsDiffer>
    <experiments>3</experiments>
</comment>
<comment type="interaction">
    <interactant intactId="EBI-712466">
        <id>Q16623</id>
    </interactant>
    <interactant intactId="EBI-723716">
        <id>Q9UEU0</id>
        <label>VTI1B</label>
    </interactant>
    <organismsDiffer>false</organismsDiffer>
    <experiments>3</experiments>
</comment>
<comment type="interaction">
    <interactant intactId="EBI-712466">
        <id>Q16623</id>
    </interactant>
    <interactant intactId="EBI-718439">
        <id>O95159</id>
        <label>ZFPL1</label>
    </interactant>
    <organismsDiffer>false</organismsDiffer>
    <experiments>3</experiments>
</comment>
<comment type="interaction">
    <interactant intactId="EBI-712466">
        <id>Q16623</id>
    </interactant>
    <interactant intactId="EBI-11278550">
        <id>P17014</id>
        <label>ZNF12</label>
    </interactant>
    <organismsDiffer>false</organismsDiffer>
    <experiments>3</experiments>
</comment>
<comment type="interaction">
    <interactant intactId="EBI-712466">
        <id>Q16623</id>
    </interactant>
    <interactant intactId="EBI-749129">
        <id>P52737</id>
        <label>ZNF136</label>
    </interactant>
    <organismsDiffer>false</organismsDiffer>
    <experiments>3</experiments>
</comment>
<comment type="interaction">
    <interactant intactId="EBI-712466">
        <id>Q16623</id>
    </interactant>
    <interactant intactId="EBI-10177272">
        <id>P15622-3</id>
        <label>ZNF250</label>
    </interactant>
    <organismsDiffer>false</organismsDiffer>
    <experiments>3</experiments>
</comment>
<comment type="interaction">
    <interactant intactId="EBI-712466">
        <id>Q16623</id>
    </interactant>
    <interactant intactId="EBI-726439">
        <id>Q8IYI8</id>
        <label>ZNF440</label>
    </interactant>
    <organismsDiffer>false</organismsDiffer>
    <experiments>3</experiments>
</comment>
<comment type="interaction">
    <interactant intactId="EBI-712466">
        <id>Q16623</id>
    </interactant>
    <interactant intactId="EBI-17216366">
        <id>Q8N8Z8</id>
        <label>ZNF441</label>
    </interactant>
    <organismsDiffer>false</organismsDiffer>
    <experiments>3</experiments>
</comment>
<comment type="interaction">
    <interactant intactId="EBI-712466">
        <id>Q16623</id>
    </interactant>
    <interactant intactId="EBI-10820574">
        <id>Q96JC4</id>
        <label>ZNF479</label>
    </interactant>
    <organismsDiffer>false</organismsDiffer>
    <experiments>3</experiments>
</comment>
<comment type="interaction">
    <interactant intactId="EBI-712466">
        <id>Q16623</id>
    </interactant>
    <interactant intactId="EBI-1105370">
        <id>Q9ULM2</id>
        <label>ZNF490</label>
    </interactant>
    <organismsDiffer>false</organismsDiffer>
    <experiments>3</experiments>
</comment>
<comment type="interaction">
    <interactant intactId="EBI-712466">
        <id>Q16623</id>
    </interactant>
    <interactant intactId="EBI-10699005">
        <id>Q8N988-2</id>
        <label>ZNF557</label>
    </interactant>
    <organismsDiffer>false</organismsDiffer>
    <experiments>3</experiments>
</comment>
<comment type="interaction">
    <interactant intactId="EBI-712466">
        <id>Q16623</id>
    </interactant>
    <interactant intactId="EBI-11090299">
        <id>Q9H7X3</id>
        <label>ZNF696</label>
    </interactant>
    <organismsDiffer>false</organismsDiffer>
    <experiments>3</experiments>
</comment>
<comment type="interaction">
    <interactant intactId="EBI-712466">
        <id>Q16623</id>
    </interactant>
    <interactant intactId="EBI-748111">
        <id>Q96C28</id>
        <label>ZNF707</label>
    </interactant>
    <organismsDiffer>false</organismsDiffer>
    <experiments>3</experiments>
</comment>
<comment type="interaction">
    <interactant intactId="EBI-712466">
        <id>Q16623</id>
    </interactant>
    <interactant intactId="EBI-3925400">
        <id>A8K8V0</id>
        <label>ZNF785</label>
    </interactant>
    <organismsDiffer>false</organismsDiffer>
    <experiments>3</experiments>
</comment>
<comment type="interaction">
    <interactant intactId="EBI-712466">
        <id>Q16623</id>
    </interactant>
    <interactant intactId="EBI-5667516">
        <id>Q9Y2P0</id>
        <label>ZNF835</label>
    </interactant>
    <organismsDiffer>false</organismsDiffer>
    <experiments>3</experiments>
</comment>
<comment type="subcellular location">
    <subcellularLocation>
        <location evidence="2">Cytoplasmic vesicle</location>
        <location evidence="2">Secretory vesicle</location>
        <location evidence="2">Synaptic vesicle membrane</location>
        <topology evidence="2">Single-pass type IV membrane protein</topology>
    </subcellularLocation>
    <subcellularLocation>
        <location evidence="2">Synapse</location>
        <location evidence="2">Synaptosome</location>
    </subcellularLocation>
    <subcellularLocation>
        <location evidence="3">Cell membrane</location>
    </subcellularLocation>
    <text evidence="3">Colocalizes with KCNB1 at the cell membrane.</text>
</comment>
<comment type="subcellular location">
    <molecule>Isoform 2</molecule>
    <subcellularLocation>
        <location evidence="15">Secreted</location>
    </subcellularLocation>
</comment>
<comment type="alternative products">
    <event type="alternative splicing"/>
    <isoform>
        <id>Q16623-1</id>
        <name>1</name>
        <sequence type="displayed"/>
    </isoform>
    <isoform>
        <id>Q16623-2</id>
        <name>2</name>
        <name>1C</name>
        <sequence type="described" ref="VSP_006338"/>
    </isoform>
    <isoform>
        <id>Q16623-3</id>
        <name>3</name>
        <sequence type="described" ref="VSP_006339"/>
    </isoform>
</comment>
<comment type="tissue specificity">
    <molecule>Isoform 1</molecule>
    <text evidence="6">Highly expressed in embryonic spinal cord and ganglia and in adult cerebellum and cerebral cortex.</text>
</comment>
<comment type="tissue specificity">
    <molecule>Isoform 2</molecule>
    <text evidence="6">Expressed in heart, liver, fat, skeletal muscle, kidney and brain.</text>
</comment>
<comment type="PTM">
    <text evidence="1 8">Phosphorylated by CK2 (By similarity). Phosphorylation at Ser-188 by DAPK1 significantly decreases its interaction with STXBP1.</text>
</comment>
<comment type="PTM">
    <text evidence="11">Sumoylated, sumoylation is required for regulation of synaptic vesicle endocytosis.</text>
</comment>
<comment type="disease">
    <text evidence="16">STX1A is located in the Williams-Beuren syndrome (WBS) critical region. WBS results from a hemizygous deletion of several genes on chromosome 7q11.23, thought to arise as a consequence of unequal crossing over between highly homologous low-copy repeat sequences flanking the deleted region.</text>
</comment>
<comment type="miscellaneous">
    <molecule>Isoform 2</molecule>
    <text evidence="15">Expression is up-regulated by phorbol 12-myristate 13-acetate (PMA), but not by forskolin.</text>
</comment>
<comment type="similarity">
    <text evidence="15">Belongs to the syntaxin family.</text>
</comment>
<comment type="sequence caution" evidence="15">
    <conflict type="erroneous initiation">
        <sequence resource="EMBL-CDS" id="AAA20940"/>
    </conflict>
    <text>Truncated N-terminus.</text>
</comment>
<protein>
    <recommendedName>
        <fullName>Syntaxin-1A</fullName>
    </recommendedName>
    <alternativeName>
        <fullName>Neuron-specific antigen HPC-1</fullName>
    </alternativeName>
</protein>
<reference key="1">
    <citation type="journal article" date="1995" name="Gene">
        <title>Cloning and sequence analysis of a cDNA encoding human syntaxin 1A, a polypeptide essential for exocytosis.</title>
        <authorList>
            <person name="Zhang R.-D."/>
            <person name="Maksymowych A.B."/>
            <person name="Simpson L.L."/>
        </authorList>
    </citation>
    <scope>NUCLEOTIDE SEQUENCE [MRNA] (ISOFORM 1)</scope>
    <source>
        <tissue>Brain</tissue>
    </source>
</reference>
<reference key="2">
    <citation type="journal article" date="1997" name="Am. J. Hum. Genet.">
        <title>Hemizygous deletion of the syntaxin 1A gene in individuals with Williams syndrome.</title>
        <authorList>
            <person name="Osborne L.R."/>
            <person name="Soder S."/>
            <person name="Shi X.-M."/>
            <person name="Pober B."/>
            <person name="Costa T."/>
            <person name="Scherer S.W."/>
            <person name="Tsui L.-C."/>
        </authorList>
    </citation>
    <scope>NUCLEOTIDE SEQUENCE [GENOMIC DNA] (ISOFORMS 1 AND 2)</scope>
</reference>
<reference key="3">
    <citation type="journal article" date="2002" name="Am. J. Med. Genet.">
        <title>Refinement of the genomic structure of STX1A and mutation analysis in nondeletion Williams syndrome patients.</title>
        <authorList>
            <person name="Wu Y.-Q."/>
            <person name="Bejjani B.A."/>
            <person name="Tsui L.-C."/>
            <person name="Mandel A."/>
            <person name="Osborne L.R."/>
            <person name="Shaffer L.G."/>
        </authorList>
    </citation>
    <scope>NUCLEOTIDE SEQUENCE [GENOMIC DNA] (ISOFORMS 1 AND 2)</scope>
    <scope>SEQUENCE REVISION TO 144</scope>
</reference>
<reference key="4">
    <citation type="journal article" date="1997" name="Biochem. J.">
        <title>Novel isoform of syntaxin 1 is expressed in mammalian cells.</title>
        <authorList>
            <person name="Jagadish M.N."/>
            <person name="Tellam J.T."/>
            <person name="Macaulay S.L."/>
            <person name="Gough K.H."/>
            <person name="James D.E."/>
            <person name="Ward C.W."/>
        </authorList>
    </citation>
    <scope>NUCLEOTIDE SEQUENCE [MRNA] (ISOFORM 2)</scope>
    <source>
        <tissue>Adipose tissue</tissue>
    </source>
</reference>
<reference key="5">
    <citation type="journal article" date="1997" name="Genomics">
        <title>Mapping of the human HPC-1/syntaxin 1A gene (STX1A) to chromosome 7 band q11.2.</title>
        <authorList>
            <person name="Nakayama T."/>
            <person name="Fujiwara T."/>
            <person name="Miyazawa A."/>
            <person name="Asakawa S."/>
            <person name="Shimizu N."/>
            <person name="Shimizu Y."/>
            <person name="Mikoshiba K."/>
            <person name="Akagawa K."/>
        </authorList>
    </citation>
    <scope>NUCLEOTIDE SEQUENCE [MRNA] (ISOFORM 1)</scope>
</reference>
<reference key="6">
    <citation type="journal article" date="2003" name="FEBS Lett.">
        <title>Expression of syntaxin 1C, an alternative splice variant of HPC-1/syntaxin 1A, is enhanced by phorbol-ester stimulation in astroglioma: participation of the PKC signaling pathway.</title>
        <authorList>
            <person name="Nakayama T."/>
            <person name="Mikoshiba K."/>
            <person name="Yamamori T."/>
            <person name="Akagawa K."/>
        </authorList>
    </citation>
    <scope>NUCLEOTIDE SEQUENCE [MRNA] (ISOFORM 2)</scope>
</reference>
<reference key="7">
    <citation type="journal article" date="2003" name="Nature">
        <title>The DNA sequence of human chromosome 7.</title>
        <authorList>
            <person name="Hillier L.W."/>
            <person name="Fulton R.S."/>
            <person name="Fulton L.A."/>
            <person name="Graves T.A."/>
            <person name="Pepin K.H."/>
            <person name="Wagner-McPherson C."/>
            <person name="Layman D."/>
            <person name="Maas J."/>
            <person name="Jaeger S."/>
            <person name="Walker R."/>
            <person name="Wylie K."/>
            <person name="Sekhon M."/>
            <person name="Becker M.C."/>
            <person name="O'Laughlin M.D."/>
            <person name="Schaller M.E."/>
            <person name="Fewell G.A."/>
            <person name="Delehaunty K.D."/>
            <person name="Miner T.L."/>
            <person name="Nash W.E."/>
            <person name="Cordes M."/>
            <person name="Du H."/>
            <person name="Sun H."/>
            <person name="Edwards J."/>
            <person name="Bradshaw-Cordum H."/>
            <person name="Ali J."/>
            <person name="Andrews S."/>
            <person name="Isak A."/>
            <person name="Vanbrunt A."/>
            <person name="Nguyen C."/>
            <person name="Du F."/>
            <person name="Lamar B."/>
            <person name="Courtney L."/>
            <person name="Kalicki J."/>
            <person name="Ozersky P."/>
            <person name="Bielicki L."/>
            <person name="Scott K."/>
            <person name="Holmes A."/>
            <person name="Harkins R."/>
            <person name="Harris A."/>
            <person name="Strong C.M."/>
            <person name="Hou S."/>
            <person name="Tomlinson C."/>
            <person name="Dauphin-Kohlberg S."/>
            <person name="Kozlowicz-Reilly A."/>
            <person name="Leonard S."/>
            <person name="Rohlfing T."/>
            <person name="Rock S.M."/>
            <person name="Tin-Wollam A.-M."/>
            <person name="Abbott A."/>
            <person name="Minx P."/>
            <person name="Maupin R."/>
            <person name="Strowmatt C."/>
            <person name="Latreille P."/>
            <person name="Miller N."/>
            <person name="Johnson D."/>
            <person name="Murray J."/>
            <person name="Woessner J.P."/>
            <person name="Wendl M.C."/>
            <person name="Yang S.-P."/>
            <person name="Schultz B.R."/>
            <person name="Wallis J.W."/>
            <person name="Spieth J."/>
            <person name="Bieri T.A."/>
            <person name="Nelson J.O."/>
            <person name="Berkowicz N."/>
            <person name="Wohldmann P.E."/>
            <person name="Cook L.L."/>
            <person name="Hickenbotham M.T."/>
            <person name="Eldred J."/>
            <person name="Williams D."/>
            <person name="Bedell J.A."/>
            <person name="Mardis E.R."/>
            <person name="Clifton S.W."/>
            <person name="Chissoe S.L."/>
            <person name="Marra M.A."/>
            <person name="Raymond C."/>
            <person name="Haugen E."/>
            <person name="Gillett W."/>
            <person name="Zhou Y."/>
            <person name="James R."/>
            <person name="Phelps K."/>
            <person name="Iadanoto S."/>
            <person name="Bubb K."/>
            <person name="Simms E."/>
            <person name="Levy R."/>
            <person name="Clendenning J."/>
            <person name="Kaul R."/>
            <person name="Kent W.J."/>
            <person name="Furey T.S."/>
            <person name="Baertsch R.A."/>
            <person name="Brent M.R."/>
            <person name="Keibler E."/>
            <person name="Flicek P."/>
            <person name="Bork P."/>
            <person name="Suyama M."/>
            <person name="Bailey J.A."/>
            <person name="Portnoy M.E."/>
            <person name="Torrents D."/>
            <person name="Chinwalla A.T."/>
            <person name="Gish W.R."/>
            <person name="Eddy S.R."/>
            <person name="McPherson J.D."/>
            <person name="Olson M.V."/>
            <person name="Eichler E.E."/>
            <person name="Green E.D."/>
            <person name="Waterston R.H."/>
            <person name="Wilson R.K."/>
        </authorList>
    </citation>
    <scope>NUCLEOTIDE SEQUENCE [LARGE SCALE GENOMIC DNA]</scope>
</reference>
<reference key="8">
    <citation type="submission" date="2005-09" db="EMBL/GenBank/DDBJ databases">
        <authorList>
            <person name="Mural R.J."/>
            <person name="Istrail S."/>
            <person name="Sutton G."/>
            <person name="Florea L."/>
            <person name="Halpern A.L."/>
            <person name="Mobarry C.M."/>
            <person name="Lippert R."/>
            <person name="Walenz B."/>
            <person name="Shatkay H."/>
            <person name="Dew I."/>
            <person name="Miller J.R."/>
            <person name="Flanigan M.J."/>
            <person name="Edwards N.J."/>
            <person name="Bolanos R."/>
            <person name="Fasulo D."/>
            <person name="Halldorsson B.V."/>
            <person name="Hannenhalli S."/>
            <person name="Turner R."/>
            <person name="Yooseph S."/>
            <person name="Lu F."/>
            <person name="Nusskern D.R."/>
            <person name="Shue B.C."/>
            <person name="Zheng X.H."/>
            <person name="Zhong F."/>
            <person name="Delcher A.L."/>
            <person name="Huson D.H."/>
            <person name="Kravitz S.A."/>
            <person name="Mouchard L."/>
            <person name="Reinert K."/>
            <person name="Remington K.A."/>
            <person name="Clark A.G."/>
            <person name="Waterman M.S."/>
            <person name="Eichler E.E."/>
            <person name="Adams M.D."/>
            <person name="Hunkapiller M.W."/>
            <person name="Myers E.W."/>
            <person name="Venter J.C."/>
        </authorList>
    </citation>
    <scope>NUCLEOTIDE SEQUENCE [LARGE SCALE GENOMIC DNA]</scope>
</reference>
<reference key="9">
    <citation type="journal article" date="2004" name="Genome Res.">
        <title>The status, quality, and expansion of the NIH full-length cDNA project: the Mammalian Gene Collection (MGC).</title>
        <authorList>
            <consortium name="The MGC Project Team"/>
        </authorList>
    </citation>
    <scope>NUCLEOTIDE SEQUENCE [LARGE SCALE MRNA] (ISOFORMS 1 AND 3)</scope>
    <source>
        <tissue>Brain</tissue>
        <tissue>Lung</tissue>
    </source>
</reference>
<reference key="10">
    <citation type="submission" date="1994-09" db="EMBL/GenBank/DDBJ databases">
        <title>Human syntaxin is homologous with rat syntaxin A and digested by BoNT C.</title>
        <authorList>
            <person name="Zhang R.-D."/>
            <person name="Simpson L."/>
        </authorList>
    </citation>
    <scope>NUCLEOTIDE SEQUENCE [MRNA] OF 15-288 (ISOFORM 1)</scope>
    <source>
        <tissue>Brain</tissue>
    </source>
</reference>
<reference key="11">
    <citation type="journal article" date="1999" name="Genomics">
        <title>Expression analysis of the human HPC-1/syntaxin 1A, a gene deleted in Williams syndrome.</title>
        <authorList>
            <person name="Botta A."/>
            <person name="Calza L."/>
            <person name="Giardino L."/>
            <person name="Potenza S."/>
            <person name="Novelli G."/>
            <person name="Dallapiccola B."/>
        </authorList>
    </citation>
    <scope>TISSUE SPECIFICITY</scope>
</reference>
<reference key="12">
    <citation type="journal article" date="2002" name="Blood">
        <title>Vesicle-associated membrane protein 3 (VAMP-3) and VAMP-8 are present in human platelets and are required for granule secretion.</title>
        <authorList>
            <person name="Polgar J."/>
            <person name="Chung S.H."/>
            <person name="Reed G.L."/>
        </authorList>
    </citation>
    <scope>INTERACTION WITH VAMP8 AND SNAP23</scope>
</reference>
<reference key="13">
    <citation type="journal article" date="2003" name="J. Biol. Chem.">
        <title>Ca2+-dependent phosphorylation of syntaxin-1A by the death-associated protein (DAP) kinase regulates its interaction with Munc18.</title>
        <authorList>
            <person name="Tian J.H."/>
            <person name="Das S."/>
            <person name="Sheng Z.H."/>
        </authorList>
    </citation>
    <scope>PHOSPHORYLATION AT SER-188</scope>
    <scope>INTERACTION WITH STXBP1</scope>
</reference>
<reference key="14">
    <citation type="journal article" date="2004" name="Nat. Cell Biol.">
        <title>Syntabulin is a microtubule-associated protein implicated in syntaxin transport in neurons.</title>
        <authorList>
            <person name="Su Q."/>
            <person name="Cai Q."/>
            <person name="Gerwin C."/>
            <person name="Smith C.L."/>
            <person name="Sheng Z.-H."/>
        </authorList>
    </citation>
    <scope>INTERACTION WITH SYBU</scope>
</reference>
<reference key="15">
    <citation type="journal article" date="2005" name="J. Proteome Res.">
        <title>Phosphoproteomic analysis of synaptosomes from human cerebral cortex.</title>
        <authorList>
            <person name="DeGiorgis J.A."/>
            <person name="Jaffe H."/>
            <person name="Moreira J.E."/>
            <person name="Carlotti C.G. Jr."/>
            <person name="Leite J.P."/>
            <person name="Pant H.C."/>
            <person name="Dosemeci A."/>
        </authorList>
    </citation>
    <scope>PHOSPHORYLATION [LARGE SCALE ANALYSIS] AT SER-14</scope>
    <scope>IDENTIFICATION BY MASS SPECTROMETRY [LARGE SCALE ANALYSIS]</scope>
    <source>
        <tissue>Brain cortex</tissue>
    </source>
</reference>
<reference key="16">
    <citation type="journal article" date="2012" name="J. Biol. Chem.">
        <title>Munc18-1 controls SNARE protein complex assembly during human sperm acrosomal exocytosis.</title>
        <authorList>
            <person name="Rodriguez F."/>
            <person name="Zanetti M.N."/>
            <person name="Mayorga L.S."/>
            <person name="Tomes C.N."/>
        </authorList>
    </citation>
    <scope>FUNCTION</scope>
</reference>
<reference key="17">
    <citation type="journal article" date="2015" name="Sci. Rep.">
        <title>SUMOylation of Syntaxin1A regulates presynaptic endocytosis.</title>
        <authorList>
            <person name="Craig T.J."/>
            <person name="Anderson D."/>
            <person name="Evans A.J."/>
            <person name="Girach F."/>
            <person name="Henley J.M."/>
        </authorList>
    </citation>
    <scope>FUNCTION</scope>
    <scope>SUMOYLATION</scope>
    <scope>INTERACTION WITH VAMP2; SNAP25 AND STXBP1</scope>
    <scope>MUTAGENESIS OF LYS-252; LYS-253 AND LYS-256</scope>
</reference>
<keyword id="KW-0025">Alternative splicing</keyword>
<keyword id="KW-1003">Cell membrane</keyword>
<keyword id="KW-0175">Coiled coil</keyword>
<keyword id="KW-0968">Cytoplasmic vesicle</keyword>
<keyword id="KW-0268">Exocytosis</keyword>
<keyword id="KW-1017">Isopeptide bond</keyword>
<keyword id="KW-0472">Membrane</keyword>
<keyword id="KW-0532">Neurotransmitter transport</keyword>
<keyword id="KW-0597">Phosphoprotein</keyword>
<keyword id="KW-1267">Proteomics identification</keyword>
<keyword id="KW-1185">Reference proteome</keyword>
<keyword id="KW-0964">Secreted</keyword>
<keyword id="KW-0770">Synapse</keyword>
<keyword id="KW-0771">Synaptosome</keyword>
<keyword id="KW-0812">Transmembrane</keyword>
<keyword id="KW-1133">Transmembrane helix</keyword>
<keyword id="KW-0813">Transport</keyword>
<keyword id="KW-0832">Ubl conjugation</keyword>
<keyword id="KW-0856">Williams-Beuren syndrome</keyword>
<gene>
    <name type="primary">STX1A</name>
    <name type="synonym">STX1</name>
</gene>
<organism>
    <name type="scientific">Homo sapiens</name>
    <name type="common">Human</name>
    <dbReference type="NCBI Taxonomy" id="9606"/>
    <lineage>
        <taxon>Eukaryota</taxon>
        <taxon>Metazoa</taxon>
        <taxon>Chordata</taxon>
        <taxon>Craniata</taxon>
        <taxon>Vertebrata</taxon>
        <taxon>Euteleostomi</taxon>
        <taxon>Mammalia</taxon>
        <taxon>Eutheria</taxon>
        <taxon>Euarchontoglires</taxon>
        <taxon>Primates</taxon>
        <taxon>Haplorrhini</taxon>
        <taxon>Catarrhini</taxon>
        <taxon>Hominidae</taxon>
        <taxon>Homo</taxon>
    </lineage>
</organism>
<dbReference type="EMBL" id="L37792">
    <property type="protein sequence ID" value="AAA53519.1"/>
    <property type="molecule type" value="mRNA"/>
</dbReference>
<dbReference type="EMBL" id="U87315">
    <property type="protein sequence ID" value="AAK54507.2"/>
    <property type="molecule type" value="Genomic_DNA"/>
</dbReference>
<dbReference type="EMBL" id="AF297001">
    <property type="protein sequence ID" value="AAK54507.2"/>
    <property type="status" value="JOINED"/>
    <property type="molecule type" value="Genomic_DNA"/>
</dbReference>
<dbReference type="EMBL" id="AF297002">
    <property type="protein sequence ID" value="AAK54507.2"/>
    <property type="status" value="JOINED"/>
    <property type="molecule type" value="Genomic_DNA"/>
</dbReference>
<dbReference type="EMBL" id="U87310">
    <property type="protein sequence ID" value="AAK54507.2"/>
    <property type="status" value="JOINED"/>
    <property type="molecule type" value="Genomic_DNA"/>
</dbReference>
<dbReference type="EMBL" id="AF297003">
    <property type="protein sequence ID" value="AAK54507.2"/>
    <property type="status" value="JOINED"/>
    <property type="molecule type" value="Genomic_DNA"/>
</dbReference>
<dbReference type="EMBL" id="U87314">
    <property type="protein sequence ID" value="AAK54507.2"/>
    <property type="status" value="JOINED"/>
    <property type="molecule type" value="Genomic_DNA"/>
</dbReference>
<dbReference type="EMBL" id="U87315">
    <property type="protein sequence ID" value="AAB65500.2"/>
    <property type="molecule type" value="Genomic_DNA"/>
</dbReference>
<dbReference type="EMBL" id="AF297001">
    <property type="protein sequence ID" value="AAB65500.2"/>
    <property type="status" value="JOINED"/>
    <property type="molecule type" value="Genomic_DNA"/>
</dbReference>
<dbReference type="EMBL" id="AF297002">
    <property type="protein sequence ID" value="AAB65500.2"/>
    <property type="status" value="JOINED"/>
    <property type="molecule type" value="Genomic_DNA"/>
</dbReference>
<dbReference type="EMBL" id="U87310">
    <property type="protein sequence ID" value="AAB65500.2"/>
    <property type="status" value="JOINED"/>
    <property type="molecule type" value="Genomic_DNA"/>
</dbReference>
<dbReference type="EMBL" id="AF297003">
    <property type="protein sequence ID" value="AAB65500.2"/>
    <property type="status" value="JOINED"/>
    <property type="molecule type" value="Genomic_DNA"/>
</dbReference>
<dbReference type="EMBL" id="U87314">
    <property type="protein sequence ID" value="AAB65500.2"/>
    <property type="status" value="JOINED"/>
    <property type="molecule type" value="Genomic_DNA"/>
</dbReference>
<dbReference type="EMBL" id="D37932">
    <property type="protein sequence ID" value="BAA07151.1"/>
    <property type="molecule type" value="mRNA"/>
</dbReference>
<dbReference type="EMBL" id="AB086954">
    <property type="protein sequence ID" value="BAC78519.1"/>
    <property type="molecule type" value="mRNA"/>
</dbReference>
<dbReference type="EMBL" id="AC073846">
    <property type="protein sequence ID" value="AAS07470.1"/>
    <property type="molecule type" value="Genomic_DNA"/>
</dbReference>
<dbReference type="EMBL" id="CH471200">
    <property type="protein sequence ID" value="EAW69650.1"/>
    <property type="molecule type" value="Genomic_DNA"/>
</dbReference>
<dbReference type="EMBL" id="BC000444">
    <property type="status" value="NOT_ANNOTATED_CDS"/>
    <property type="molecule type" value="mRNA"/>
</dbReference>
<dbReference type="EMBL" id="BC003011">
    <property type="protein sequence ID" value="AAH03011.1"/>
    <property type="molecule type" value="mRNA"/>
</dbReference>
<dbReference type="EMBL" id="BC064644">
    <property type="protein sequence ID" value="AAH64644.1"/>
    <property type="molecule type" value="mRNA"/>
</dbReference>
<dbReference type="EMBL" id="U12918">
    <property type="protein sequence ID" value="AAA20940.1"/>
    <property type="status" value="ALT_INIT"/>
    <property type="molecule type" value="mRNA"/>
</dbReference>
<dbReference type="CCDS" id="CCDS34655.1">
    <molecule id="Q16623-1"/>
</dbReference>
<dbReference type="CCDS" id="CCDS55120.1">
    <molecule id="Q16623-3"/>
</dbReference>
<dbReference type="RefSeq" id="NP_001159375.1">
    <molecule id="Q16623-3"/>
    <property type="nucleotide sequence ID" value="NM_001165903.2"/>
</dbReference>
<dbReference type="RefSeq" id="NP_004594.1">
    <molecule id="Q16623-1"/>
    <property type="nucleotide sequence ID" value="NM_004603.4"/>
</dbReference>
<dbReference type="BMRB" id="Q16623"/>
<dbReference type="SMR" id="Q16623"/>
<dbReference type="BioGRID" id="112676">
    <property type="interactions" value="181"/>
</dbReference>
<dbReference type="CORUM" id="Q16623"/>
<dbReference type="DIP" id="DIP-390N"/>
<dbReference type="FunCoup" id="Q16623">
    <property type="interactions" value="938"/>
</dbReference>
<dbReference type="IntAct" id="Q16623">
    <property type="interactions" value="135"/>
</dbReference>
<dbReference type="MINT" id="Q16623"/>
<dbReference type="STRING" id="9606.ENSP00000222812"/>
<dbReference type="TCDB" id="1.F.1.1.1">
    <property type="family name" value="the synaptosomal vesicle fusion pore (svf-pore) family"/>
</dbReference>
<dbReference type="TCDB" id="8.A.91.1.4">
    <property type="family name" value="the syntaxin (syntaxin) family"/>
</dbReference>
<dbReference type="GlyCosmos" id="Q16623">
    <property type="glycosylation" value="1 site, 1 glycan"/>
</dbReference>
<dbReference type="GlyGen" id="Q16623">
    <property type="glycosylation" value="1 site, 1 O-linked glycan (1 site)"/>
</dbReference>
<dbReference type="iPTMnet" id="Q16623"/>
<dbReference type="PhosphoSitePlus" id="Q16623"/>
<dbReference type="BioMuta" id="STX1A"/>
<dbReference type="DMDM" id="2501084"/>
<dbReference type="jPOST" id="Q16623"/>
<dbReference type="MassIVE" id="Q16623"/>
<dbReference type="PaxDb" id="9606-ENSP00000222812"/>
<dbReference type="PeptideAtlas" id="Q16623"/>
<dbReference type="ProteomicsDB" id="60963">
    <molecule id="Q16623-1"/>
</dbReference>
<dbReference type="ProteomicsDB" id="60964">
    <molecule id="Q16623-2"/>
</dbReference>
<dbReference type="ProteomicsDB" id="60965">
    <molecule id="Q16623-3"/>
</dbReference>
<dbReference type="ProteomicsDB" id="69314"/>
<dbReference type="Pumba" id="Q16623"/>
<dbReference type="Antibodypedia" id="3644">
    <property type="antibodies" value="695 antibodies from 45 providers"/>
</dbReference>
<dbReference type="DNASU" id="6804"/>
<dbReference type="Ensembl" id="ENST00000222812.8">
    <molecule id="Q16623-1"/>
    <property type="protein sequence ID" value="ENSP00000222812.3"/>
    <property type="gene ID" value="ENSG00000106089.12"/>
</dbReference>
<dbReference type="Ensembl" id="ENST00000395156.7">
    <molecule id="Q16623-3"/>
    <property type="protein sequence ID" value="ENSP00000378585.3"/>
    <property type="gene ID" value="ENSG00000106089.12"/>
</dbReference>
<dbReference type="GeneID" id="6804"/>
<dbReference type="KEGG" id="hsa:6804"/>
<dbReference type="MANE-Select" id="ENST00000222812.8">
    <property type="protein sequence ID" value="ENSP00000222812.3"/>
    <property type="RefSeq nucleotide sequence ID" value="NM_004603.4"/>
    <property type="RefSeq protein sequence ID" value="NP_004594.1"/>
</dbReference>
<dbReference type="UCSC" id="uc003tyy.4">
    <molecule id="Q16623-1"/>
    <property type="organism name" value="human"/>
</dbReference>
<dbReference type="AGR" id="HGNC:11433"/>
<dbReference type="CTD" id="6804"/>
<dbReference type="DisGeNET" id="6804"/>
<dbReference type="GeneCards" id="STX1A"/>
<dbReference type="HGNC" id="HGNC:11433">
    <property type="gene designation" value="STX1A"/>
</dbReference>
<dbReference type="HPA" id="ENSG00000106089">
    <property type="expression patterns" value="Group enriched (brain, pituitary gland)"/>
</dbReference>
<dbReference type="MalaCards" id="STX1A"/>
<dbReference type="MIM" id="186590">
    <property type="type" value="gene"/>
</dbReference>
<dbReference type="neXtProt" id="NX_Q16623"/>
<dbReference type="OpenTargets" id="ENSG00000106089"/>
<dbReference type="Orphanet" id="586">
    <property type="disease" value="Cystic fibrosis"/>
</dbReference>
<dbReference type="Orphanet" id="904">
    <property type="disease" value="Williams syndrome"/>
</dbReference>
<dbReference type="PharmGKB" id="PA36233"/>
<dbReference type="VEuPathDB" id="HostDB:ENSG00000106089"/>
<dbReference type="eggNOG" id="KOG0810">
    <property type="taxonomic scope" value="Eukaryota"/>
</dbReference>
<dbReference type="GeneTree" id="ENSGT01030000234627"/>
<dbReference type="HOGENOM" id="CLU_042423_2_2_1"/>
<dbReference type="InParanoid" id="Q16623"/>
<dbReference type="OMA" id="KTTHGPK"/>
<dbReference type="OrthoDB" id="10255013at2759"/>
<dbReference type="PAN-GO" id="Q16623">
    <property type="GO annotations" value="12 GO annotations based on evolutionary models"/>
</dbReference>
<dbReference type="PhylomeDB" id="Q16623"/>
<dbReference type="TreeFam" id="TF313763"/>
<dbReference type="PathwayCommons" id="Q16623"/>
<dbReference type="Reactome" id="R-HSA-181429">
    <property type="pathway name" value="Serotonin Neurotransmitter Release Cycle"/>
</dbReference>
<dbReference type="Reactome" id="R-HSA-181430">
    <property type="pathway name" value="Norepinephrine Neurotransmitter Release Cycle"/>
</dbReference>
<dbReference type="Reactome" id="R-HSA-210500">
    <property type="pathway name" value="Glutamate Neurotransmitter Release Cycle"/>
</dbReference>
<dbReference type="Reactome" id="R-HSA-212676">
    <property type="pathway name" value="Dopamine Neurotransmitter Release Cycle"/>
</dbReference>
<dbReference type="Reactome" id="R-HSA-264642">
    <property type="pathway name" value="Acetylcholine Neurotransmitter Release Cycle"/>
</dbReference>
<dbReference type="Reactome" id="R-HSA-264876">
    <property type="pathway name" value="Insulin processing"/>
</dbReference>
<dbReference type="Reactome" id="R-HSA-422356">
    <property type="pathway name" value="Regulation of insulin secretion"/>
</dbReference>
<dbReference type="Reactome" id="R-HSA-449836">
    <property type="pathway name" value="Other interleukin signaling"/>
</dbReference>
<dbReference type="Reactome" id="R-HSA-5250971">
    <property type="pathway name" value="Toxicity of botulinum toxin type C (botC)"/>
</dbReference>
<dbReference type="Reactome" id="R-HSA-5682910">
    <property type="pathway name" value="LGI-ADAM interactions"/>
</dbReference>
<dbReference type="Reactome" id="R-HSA-6794361">
    <property type="pathway name" value="Neurexins and neuroligins"/>
</dbReference>
<dbReference type="Reactome" id="R-HSA-888590">
    <property type="pathway name" value="GABA synthesis, release, reuptake and degradation"/>
</dbReference>
<dbReference type="Reactome" id="R-HSA-9609523">
    <property type="pathway name" value="Insertion of tail-anchored proteins into the endoplasmic reticulum membrane"/>
</dbReference>
<dbReference type="Reactome" id="R-HSA-9662360">
    <property type="pathway name" value="Sensory processing of sound by inner hair cells of the cochlea"/>
</dbReference>
<dbReference type="SignaLink" id="Q16623"/>
<dbReference type="SIGNOR" id="Q16623"/>
<dbReference type="BioGRID-ORCS" id="6804">
    <property type="hits" value="11 hits in 1156 CRISPR screens"/>
</dbReference>
<dbReference type="CD-CODE" id="FB4E32DD">
    <property type="entry name" value="Presynaptic clusters and postsynaptic densities"/>
</dbReference>
<dbReference type="ChiTaRS" id="STX1A">
    <property type="organism name" value="human"/>
</dbReference>
<dbReference type="GeneWiki" id="STX1A"/>
<dbReference type="GenomeRNAi" id="6804"/>
<dbReference type="Pharos" id="Q16623">
    <property type="development level" value="Tbio"/>
</dbReference>
<dbReference type="PRO" id="PR:Q16623"/>
<dbReference type="Proteomes" id="UP000005640">
    <property type="component" value="Chromosome 7"/>
</dbReference>
<dbReference type="RNAct" id="Q16623">
    <property type="molecule type" value="protein"/>
</dbReference>
<dbReference type="Bgee" id="ENSG00000106089">
    <property type="expression patterns" value="Expressed in right frontal lobe and 114 other cell types or tissues"/>
</dbReference>
<dbReference type="ExpressionAtlas" id="Q16623">
    <property type="expression patterns" value="baseline and differential"/>
</dbReference>
<dbReference type="GO" id="GO:0042641">
    <property type="term" value="C:actomyosin"/>
    <property type="evidence" value="ECO:0007669"/>
    <property type="project" value="Ensembl"/>
</dbReference>
<dbReference type="GO" id="GO:0030424">
    <property type="term" value="C:axon"/>
    <property type="evidence" value="ECO:0007669"/>
    <property type="project" value="Ensembl"/>
</dbReference>
<dbReference type="GO" id="GO:0005829">
    <property type="term" value="C:cytosol"/>
    <property type="evidence" value="ECO:0000304"/>
    <property type="project" value="Reactome"/>
</dbReference>
<dbReference type="GO" id="GO:0012505">
    <property type="term" value="C:endomembrane system"/>
    <property type="evidence" value="ECO:0000318"/>
    <property type="project" value="GO_Central"/>
</dbReference>
<dbReference type="GO" id="GO:0005576">
    <property type="term" value="C:extracellular region"/>
    <property type="evidence" value="ECO:0007669"/>
    <property type="project" value="UniProtKB-SubCell"/>
</dbReference>
<dbReference type="GO" id="GO:0098978">
    <property type="term" value="C:glutamatergic synapse"/>
    <property type="evidence" value="ECO:0007669"/>
    <property type="project" value="Ensembl"/>
</dbReference>
<dbReference type="GO" id="GO:0043005">
    <property type="term" value="C:neuron projection"/>
    <property type="evidence" value="ECO:0000314"/>
    <property type="project" value="MGI"/>
</dbReference>
<dbReference type="GO" id="GO:0031965">
    <property type="term" value="C:nuclear membrane"/>
    <property type="evidence" value="ECO:0007669"/>
    <property type="project" value="Ensembl"/>
</dbReference>
<dbReference type="GO" id="GO:0005886">
    <property type="term" value="C:plasma membrane"/>
    <property type="evidence" value="ECO:0000314"/>
    <property type="project" value="UniProtKB"/>
</dbReference>
<dbReference type="GO" id="GO:0098839">
    <property type="term" value="C:postsynaptic density membrane"/>
    <property type="evidence" value="ECO:0007669"/>
    <property type="project" value="Ensembl"/>
</dbReference>
<dbReference type="GO" id="GO:0048787">
    <property type="term" value="C:presynaptic active zone membrane"/>
    <property type="evidence" value="ECO:0007669"/>
    <property type="project" value="Ensembl"/>
</dbReference>
<dbReference type="GO" id="GO:0098685">
    <property type="term" value="C:Schaffer collateral - CA1 synapse"/>
    <property type="evidence" value="ECO:0007669"/>
    <property type="project" value="Ensembl"/>
</dbReference>
<dbReference type="GO" id="GO:0030141">
    <property type="term" value="C:secretory granule"/>
    <property type="evidence" value="ECO:0007669"/>
    <property type="project" value="Ensembl"/>
</dbReference>
<dbReference type="GO" id="GO:0031201">
    <property type="term" value="C:SNARE complex"/>
    <property type="evidence" value="ECO:0000314"/>
    <property type="project" value="UniProtKB"/>
</dbReference>
<dbReference type="GO" id="GO:0030672">
    <property type="term" value="C:synaptic vesicle membrane"/>
    <property type="evidence" value="ECO:0007669"/>
    <property type="project" value="UniProtKB-SubCell"/>
</dbReference>
<dbReference type="GO" id="GO:0070044">
    <property type="term" value="C:synaptobrevin 2-SNAP-25-syntaxin-1a complex"/>
    <property type="evidence" value="ECO:0007669"/>
    <property type="project" value="Ensembl"/>
</dbReference>
<dbReference type="GO" id="GO:0070032">
    <property type="term" value="C:synaptobrevin 2-SNAP-25-syntaxin-1a-complexin I complex"/>
    <property type="evidence" value="ECO:0007669"/>
    <property type="project" value="Ensembl"/>
</dbReference>
<dbReference type="GO" id="GO:0070033">
    <property type="term" value="C:synaptobrevin 2-SNAP-25-syntaxin-1a-complexin II complex"/>
    <property type="evidence" value="ECO:0007669"/>
    <property type="project" value="Ensembl"/>
</dbReference>
<dbReference type="GO" id="GO:0008076">
    <property type="term" value="C:voltage-gated potassium channel complex"/>
    <property type="evidence" value="ECO:0007669"/>
    <property type="project" value="Ensembl"/>
</dbReference>
<dbReference type="GO" id="GO:0043008">
    <property type="term" value="F:ATP-dependent protein binding"/>
    <property type="evidence" value="ECO:0007669"/>
    <property type="project" value="Ensembl"/>
</dbReference>
<dbReference type="GO" id="GO:0019855">
    <property type="term" value="F:calcium channel inhibitor activity"/>
    <property type="evidence" value="ECO:0007669"/>
    <property type="project" value="Ensembl"/>
</dbReference>
<dbReference type="GO" id="GO:0048306">
    <property type="term" value="F:calcium-dependent protein binding"/>
    <property type="evidence" value="ECO:0007669"/>
    <property type="project" value="Ensembl"/>
</dbReference>
<dbReference type="GO" id="GO:0019869">
    <property type="term" value="F:chloride channel inhibitor activity"/>
    <property type="evidence" value="ECO:0000314"/>
    <property type="project" value="UniProtKB"/>
</dbReference>
<dbReference type="GO" id="GO:0042802">
    <property type="term" value="F:identical protein binding"/>
    <property type="evidence" value="ECO:0000353"/>
    <property type="project" value="IntAct"/>
</dbReference>
<dbReference type="GO" id="GO:0019900">
    <property type="term" value="F:kinase binding"/>
    <property type="evidence" value="ECO:0000353"/>
    <property type="project" value="UniProtKB"/>
</dbReference>
<dbReference type="GO" id="GO:0032028">
    <property type="term" value="F:myosin head/neck binding"/>
    <property type="evidence" value="ECO:0007669"/>
    <property type="project" value="Ensembl"/>
</dbReference>
<dbReference type="GO" id="GO:0044877">
    <property type="term" value="F:protein-containing complex binding"/>
    <property type="evidence" value="ECO:0007669"/>
    <property type="project" value="Ensembl"/>
</dbReference>
<dbReference type="GO" id="GO:0005484">
    <property type="term" value="F:SNAP receptor activity"/>
    <property type="evidence" value="ECO:0000318"/>
    <property type="project" value="GO_Central"/>
</dbReference>
<dbReference type="GO" id="GO:0000149">
    <property type="term" value="F:SNARE binding"/>
    <property type="evidence" value="ECO:0000318"/>
    <property type="project" value="GO_Central"/>
</dbReference>
<dbReference type="GO" id="GO:0044325">
    <property type="term" value="F:transmembrane transporter binding"/>
    <property type="evidence" value="ECO:0007669"/>
    <property type="project" value="Ensembl"/>
</dbReference>
<dbReference type="GO" id="GO:0017156">
    <property type="term" value="P:calcium-ion regulated exocytosis"/>
    <property type="evidence" value="ECO:0007669"/>
    <property type="project" value="Ensembl"/>
</dbReference>
<dbReference type="GO" id="GO:0006887">
    <property type="term" value="P:exocytosis"/>
    <property type="evidence" value="ECO:0000318"/>
    <property type="project" value="GO_Central"/>
</dbReference>
<dbReference type="GO" id="GO:0030073">
    <property type="term" value="P:insulin secretion"/>
    <property type="evidence" value="ECO:0007669"/>
    <property type="project" value="Ensembl"/>
</dbReference>
<dbReference type="GO" id="GO:0006886">
    <property type="term" value="P:intracellular protein transport"/>
    <property type="evidence" value="ECO:0000318"/>
    <property type="project" value="GO_Central"/>
</dbReference>
<dbReference type="GO" id="GO:0045956">
    <property type="term" value="P:positive regulation of calcium ion-dependent exocytosis"/>
    <property type="evidence" value="ECO:0000250"/>
    <property type="project" value="UniProtKB"/>
</dbReference>
<dbReference type="GO" id="GO:0033605">
    <property type="term" value="P:positive regulation of catecholamine secretion"/>
    <property type="evidence" value="ECO:0000250"/>
    <property type="project" value="UniProtKB"/>
</dbReference>
<dbReference type="GO" id="GO:2000463">
    <property type="term" value="P:positive regulation of excitatory postsynaptic potential"/>
    <property type="evidence" value="ECO:0007669"/>
    <property type="project" value="Ensembl"/>
</dbReference>
<dbReference type="GO" id="GO:0001956">
    <property type="term" value="P:positive regulation of neurotransmitter secretion"/>
    <property type="evidence" value="ECO:0007669"/>
    <property type="project" value="Ensembl"/>
</dbReference>
<dbReference type="GO" id="GO:0010701">
    <property type="term" value="P:positive regulation of norepinephrine secretion"/>
    <property type="evidence" value="ECO:0000250"/>
    <property type="project" value="UniProtKB"/>
</dbReference>
<dbReference type="GO" id="GO:0072657">
    <property type="term" value="P:protein localization to membrane"/>
    <property type="evidence" value="ECO:0007669"/>
    <property type="project" value="Ensembl"/>
</dbReference>
<dbReference type="GO" id="GO:0016925">
    <property type="term" value="P:protein sumoylation"/>
    <property type="evidence" value="ECO:0000314"/>
    <property type="project" value="UniProtKB"/>
</dbReference>
<dbReference type="GO" id="GO:0050796">
    <property type="term" value="P:regulation of insulin secretion"/>
    <property type="evidence" value="ECO:0000304"/>
    <property type="project" value="UniProtKB"/>
</dbReference>
<dbReference type="GO" id="GO:0010807">
    <property type="term" value="P:regulation of synaptic vesicle priming"/>
    <property type="evidence" value="ECO:0007669"/>
    <property type="project" value="Ensembl"/>
</dbReference>
<dbReference type="GO" id="GO:0009629">
    <property type="term" value="P:response to gravity"/>
    <property type="evidence" value="ECO:0007669"/>
    <property type="project" value="Ensembl"/>
</dbReference>
<dbReference type="GO" id="GO:0032940">
    <property type="term" value="P:secretion by cell"/>
    <property type="evidence" value="ECO:0000314"/>
    <property type="project" value="UniProtKB"/>
</dbReference>
<dbReference type="GO" id="GO:0035493">
    <property type="term" value="P:SNARE complex assembly"/>
    <property type="evidence" value="ECO:0007669"/>
    <property type="project" value="Ensembl"/>
</dbReference>
<dbReference type="GO" id="GO:0016081">
    <property type="term" value="P:synaptic vesicle docking"/>
    <property type="evidence" value="ECO:0007669"/>
    <property type="project" value="Ensembl"/>
</dbReference>
<dbReference type="GO" id="GO:0048488">
    <property type="term" value="P:synaptic vesicle endocytosis"/>
    <property type="evidence" value="ECO:0000314"/>
    <property type="project" value="UniProtKB"/>
</dbReference>
<dbReference type="GO" id="GO:0016079">
    <property type="term" value="P:synaptic vesicle exocytosis"/>
    <property type="evidence" value="ECO:0000314"/>
    <property type="project" value="UniProtKB"/>
</dbReference>
<dbReference type="GO" id="GO:0048278">
    <property type="term" value="P:vesicle docking"/>
    <property type="evidence" value="ECO:0000318"/>
    <property type="project" value="GO_Central"/>
</dbReference>
<dbReference type="GO" id="GO:0006906">
    <property type="term" value="P:vesicle fusion"/>
    <property type="evidence" value="ECO:0000318"/>
    <property type="project" value="GO_Central"/>
</dbReference>
<dbReference type="CDD" id="cd15880">
    <property type="entry name" value="SNARE_syntaxin1"/>
    <property type="match status" value="1"/>
</dbReference>
<dbReference type="CDD" id="cd00179">
    <property type="entry name" value="SynN"/>
    <property type="match status" value="1"/>
</dbReference>
<dbReference type="FunFam" id="1.20.58.70:FF:000042">
    <property type="entry name" value="Syntaxin 11b, tandem duplicate 2"/>
    <property type="match status" value="1"/>
</dbReference>
<dbReference type="FunFam" id="1.20.5.110:FF:000005">
    <property type="entry name" value="Syntaxin 1B"/>
    <property type="match status" value="1"/>
</dbReference>
<dbReference type="Gene3D" id="1.20.5.110">
    <property type="match status" value="1"/>
</dbReference>
<dbReference type="Gene3D" id="1.20.58.70">
    <property type="match status" value="1"/>
</dbReference>
<dbReference type="InterPro" id="IPR010989">
    <property type="entry name" value="SNARE"/>
</dbReference>
<dbReference type="InterPro" id="IPR045242">
    <property type="entry name" value="Syntaxin"/>
</dbReference>
<dbReference type="InterPro" id="IPR006012">
    <property type="entry name" value="Syntaxin/epimorphin_CS"/>
</dbReference>
<dbReference type="InterPro" id="IPR006011">
    <property type="entry name" value="Syntaxin_N"/>
</dbReference>
<dbReference type="InterPro" id="IPR000727">
    <property type="entry name" value="T_SNARE_dom"/>
</dbReference>
<dbReference type="PANTHER" id="PTHR19957">
    <property type="entry name" value="SYNTAXIN"/>
    <property type="match status" value="1"/>
</dbReference>
<dbReference type="PANTHER" id="PTHR19957:SF84">
    <property type="entry name" value="SYNTAXIN-1A"/>
    <property type="match status" value="1"/>
</dbReference>
<dbReference type="Pfam" id="PF05739">
    <property type="entry name" value="SNARE"/>
    <property type="match status" value="1"/>
</dbReference>
<dbReference type="Pfam" id="PF00804">
    <property type="entry name" value="Syntaxin"/>
    <property type="match status" value="1"/>
</dbReference>
<dbReference type="SMART" id="SM00503">
    <property type="entry name" value="SynN"/>
    <property type="match status" value="1"/>
</dbReference>
<dbReference type="SMART" id="SM00397">
    <property type="entry name" value="t_SNARE"/>
    <property type="match status" value="1"/>
</dbReference>
<dbReference type="SUPFAM" id="SSF47661">
    <property type="entry name" value="t-snare proteins"/>
    <property type="match status" value="1"/>
</dbReference>
<dbReference type="PROSITE" id="PS00914">
    <property type="entry name" value="SYNTAXIN"/>
    <property type="match status" value="1"/>
</dbReference>
<dbReference type="PROSITE" id="PS50192">
    <property type="entry name" value="T_SNARE"/>
    <property type="match status" value="1"/>
</dbReference>
<evidence type="ECO:0000250" key="1"/>
<evidence type="ECO:0000250" key="2">
    <source>
        <dbReference type="UniProtKB" id="O35526"/>
    </source>
</evidence>
<evidence type="ECO:0000250" key="3">
    <source>
        <dbReference type="UniProtKB" id="P32851"/>
    </source>
</evidence>
<evidence type="ECO:0000255" key="4"/>
<evidence type="ECO:0000255" key="5">
    <source>
        <dbReference type="PROSITE-ProRule" id="PRU00202"/>
    </source>
</evidence>
<evidence type="ECO:0000269" key="6">
    <source>
    </source>
</evidence>
<evidence type="ECO:0000269" key="7">
    <source>
    </source>
</evidence>
<evidence type="ECO:0000269" key="8">
    <source>
    </source>
</evidence>
<evidence type="ECO:0000269" key="9">
    <source>
    </source>
</evidence>
<evidence type="ECO:0000269" key="10">
    <source>
    </source>
</evidence>
<evidence type="ECO:0000269" key="11">
    <source>
    </source>
</evidence>
<evidence type="ECO:0000303" key="12">
    <source>
    </source>
</evidence>
<evidence type="ECO:0000303" key="13">
    <source>
    </source>
</evidence>
<evidence type="ECO:0000303" key="14">
    <source>
    </source>
</evidence>
<evidence type="ECO:0000305" key="15"/>
<evidence type="ECO:0000305" key="16">
    <source>
    </source>
</evidence>
<evidence type="ECO:0007744" key="17">
    <source>
    </source>
</evidence>
<proteinExistence type="evidence at protein level"/>
<accession>Q16623</accession>
<accession>O15447</accession>
<accession>O15448</accession>
<accession>Q12936</accession>
<accession>Q75MD9</accession>
<accession>Q7Z5K3</accession>
<accession>Q9BPZ6</accession>
<sequence length="288" mass="33023">MKDRTQELRTAKDSDDDDDVAVTVDRDRFMDEFFEQVEEIRGFIDKIAENVEEVKRKHSAILASPNPDEKTKEELEELMSDIKKTANKVRSKLKSIEQSIEQEEGLNRSSADLRIRKTQHSTLSRKFVEVMSEYNATQSDYRERCKGRIQRQLEITGRTTTSEELEDMLESGNPAIFASGIIMDSSISKQALSEIETRHSEIIKLENSIRELHDMFMDMAMLVESQGEMIDRIEYNVEHAVDYVERAVSDTKKAVKYQSKARRKKIMIIICCVILGIVIASTVGGIFA</sequence>